<proteinExistence type="evidence at protein level"/>
<name>O16A_CONGE</name>
<dbReference type="EMBL" id="M84612">
    <property type="protein sequence ID" value="AAA81590.1"/>
    <property type="molecule type" value="mRNA"/>
</dbReference>
<dbReference type="PIR" id="A44006">
    <property type="entry name" value="NTKN6G"/>
</dbReference>
<dbReference type="PDB" id="1OMC">
    <property type="method" value="NMR"/>
    <property type="chains" value="A=46-72"/>
</dbReference>
<dbReference type="PDB" id="1TR6">
    <property type="method" value="NMR"/>
    <property type="chains" value="A=46-72"/>
</dbReference>
<dbReference type="PDB" id="1TTL">
    <property type="method" value="NMR"/>
    <property type="chains" value="A=46-72"/>
</dbReference>
<dbReference type="PDB" id="2CCO">
    <property type="method" value="NMR"/>
    <property type="chains" value="A=46-72"/>
</dbReference>
<dbReference type="PDBsum" id="1OMC"/>
<dbReference type="PDBsum" id="1TR6"/>
<dbReference type="PDBsum" id="1TTL"/>
<dbReference type="PDBsum" id="2CCO"/>
<dbReference type="SMR" id="P01522"/>
<dbReference type="IntAct" id="P01522">
    <property type="interactions" value="1"/>
</dbReference>
<dbReference type="ConoServer" id="820">
    <property type="toxin name" value="GVIA precursor"/>
</dbReference>
<dbReference type="EvolutionaryTrace" id="P01522"/>
<dbReference type="GO" id="GO:0005576">
    <property type="term" value="C:extracellular region"/>
    <property type="evidence" value="ECO:0007669"/>
    <property type="project" value="UniProtKB-SubCell"/>
</dbReference>
<dbReference type="GO" id="GO:0044231">
    <property type="term" value="C:host cell presynaptic membrane"/>
    <property type="evidence" value="ECO:0007669"/>
    <property type="project" value="UniProtKB-KW"/>
</dbReference>
<dbReference type="GO" id="GO:0005246">
    <property type="term" value="F:calcium channel regulator activity"/>
    <property type="evidence" value="ECO:0007669"/>
    <property type="project" value="UniProtKB-KW"/>
</dbReference>
<dbReference type="GO" id="GO:0008200">
    <property type="term" value="F:ion channel inhibitor activity"/>
    <property type="evidence" value="ECO:0007669"/>
    <property type="project" value="InterPro"/>
</dbReference>
<dbReference type="GO" id="GO:0090729">
    <property type="term" value="F:toxin activity"/>
    <property type="evidence" value="ECO:0007669"/>
    <property type="project" value="UniProtKB-KW"/>
</dbReference>
<dbReference type="InterPro" id="IPR004214">
    <property type="entry name" value="Conotoxin"/>
</dbReference>
<dbReference type="InterPro" id="IPR012321">
    <property type="entry name" value="Conotoxin_omega-typ_CS"/>
</dbReference>
<dbReference type="Pfam" id="PF02950">
    <property type="entry name" value="Conotoxin"/>
    <property type="match status" value="1"/>
</dbReference>
<dbReference type="SUPFAM" id="SSF57059">
    <property type="entry name" value="omega toxin-like"/>
    <property type="match status" value="1"/>
</dbReference>
<dbReference type="PROSITE" id="PS60004">
    <property type="entry name" value="OMEGA_CONOTOXIN"/>
    <property type="match status" value="1"/>
</dbReference>
<comment type="function">
    <molecule>Omega-conotoxin GVIA</molecule>
    <text evidence="3 4">Omega-conotoxins act at presynaptic membranes, they bind and block voltage-gated calcium channels (Cav). This toxin blocks N-type calcium channels (Cav2.2/CACNA1B) with a high potency (it displaces [125I]GVIA with an IC(50)=3.7-38 pM) (PubMed:10938268, PubMed:11724570).</text>
</comment>
<comment type="subcellular location">
    <subcellularLocation>
        <location evidence="6">Secreted</location>
    </subcellularLocation>
</comment>
<comment type="tissue specificity">
    <text evidence="17">Expressed by the venom duct.</text>
</comment>
<comment type="domain">
    <text evidence="2 8 9 10 11">The presence of a 'disulfide through disulfide knot' structurally defines this protein as a knottin.</text>
</comment>
<comment type="domain">
    <text evidence="16">The cysteine framework is VI/VII (C-C-CC-C-C).</text>
</comment>
<comment type="miscellaneous">
    <text evidence="3">Has a very low activity on Cav2.1 (it displaces [125I]MVIIC with an IC(50)=1.05 uM) (PubMed:10938268).</text>
</comment>
<comment type="similarity">
    <text evidence="16">Belongs to the conotoxin O1 superfamily.</text>
</comment>
<keyword id="KW-0002">3D-structure</keyword>
<keyword id="KW-0027">Amidation</keyword>
<keyword id="KW-0108">Calcium channel impairing toxin</keyword>
<keyword id="KW-0903">Direct protein sequencing</keyword>
<keyword id="KW-1015">Disulfide bond</keyword>
<keyword id="KW-0379">Hydroxylation</keyword>
<keyword id="KW-0872">Ion channel impairing toxin</keyword>
<keyword id="KW-0960">Knottin</keyword>
<keyword id="KW-0528">Neurotoxin</keyword>
<keyword id="KW-0638">Presynaptic neurotoxin</keyword>
<keyword id="KW-0964">Secreted</keyword>
<keyword id="KW-0732">Signal</keyword>
<keyword id="KW-0800">Toxin</keyword>
<keyword id="KW-1218">Voltage-gated calcium channel impairing toxin</keyword>
<evidence type="ECO:0000255" key="1"/>
<evidence type="ECO:0000269" key="2">
    <source>
    </source>
</evidence>
<evidence type="ECO:0000269" key="3">
    <source>
    </source>
</evidence>
<evidence type="ECO:0000269" key="4">
    <source>
    </source>
</evidence>
<evidence type="ECO:0000269" key="5">
    <source>
    </source>
</evidence>
<evidence type="ECO:0000269" key="6">
    <source>
    </source>
</evidence>
<evidence type="ECO:0000269" key="7">
    <source>
    </source>
</evidence>
<evidence type="ECO:0000269" key="8">
    <source>
    </source>
</evidence>
<evidence type="ECO:0000269" key="9">
    <source>
    </source>
</evidence>
<evidence type="ECO:0000269" key="10">
    <source>
    </source>
</evidence>
<evidence type="ECO:0000269" key="11">
    <source>
    </source>
</evidence>
<evidence type="ECO:0000269" key="12">
    <source>
    </source>
</evidence>
<evidence type="ECO:0000269" key="13">
    <source>
    </source>
</evidence>
<evidence type="ECO:0000303" key="14">
    <source>
    </source>
</evidence>
<evidence type="ECO:0000303" key="15">
    <source>
    </source>
</evidence>
<evidence type="ECO:0000305" key="16"/>
<evidence type="ECO:0000305" key="17">
    <source>
    </source>
</evidence>
<evidence type="ECO:0000312" key="18">
    <source>
        <dbReference type="PDB" id="1OMC"/>
    </source>
</evidence>
<evidence type="ECO:0000312" key="19">
    <source>
        <dbReference type="PDB" id="1TR6"/>
    </source>
</evidence>
<evidence type="ECO:0000312" key="20">
    <source>
        <dbReference type="PDB" id="1TTL"/>
    </source>
</evidence>
<evidence type="ECO:0000312" key="21">
    <source>
        <dbReference type="PDB" id="2CCO"/>
    </source>
</evidence>
<evidence type="ECO:0007829" key="22">
    <source>
        <dbReference type="PDB" id="1OMC"/>
    </source>
</evidence>
<feature type="signal peptide" evidence="1">
    <location>
        <begin position="1"/>
        <end position="22"/>
    </location>
</feature>
<feature type="propeptide" id="PRO_0000034906" evidence="5 6">
    <location>
        <begin position="23"/>
        <end position="45"/>
    </location>
</feature>
<feature type="peptide" id="PRO_0000034907" description="Omega-conotoxin GVIB" evidence="5">
    <location>
        <begin position="46"/>
        <end position="73"/>
    </location>
</feature>
<feature type="peptide" id="PRO_0000034908" description="Omega-conotoxin GVIA" evidence="6">
    <location>
        <begin position="46"/>
        <end position="72"/>
    </location>
</feature>
<feature type="peptide" id="PRO_0000034909" description="Omega-conotoxin GVIC" evidence="5">
    <location>
        <begin position="46"/>
        <end position="71"/>
    </location>
</feature>
<feature type="modified residue" description="4-hydroxyproline" evidence="6">
    <location>
        <position position="49"/>
    </location>
</feature>
<feature type="modified residue" description="4-hydroxyproline" evidence="6">
    <location>
        <position position="55"/>
    </location>
</feature>
<feature type="modified residue" description="4-hydroxyproline" evidence="6">
    <location>
        <position position="66"/>
    </location>
</feature>
<feature type="modified residue" description="Tyrosine amide; in form omega-conotoxin GVIA" evidence="6">
    <location>
        <position position="72"/>
    </location>
</feature>
<feature type="disulfide bond" evidence="2 8 9 10 11 18 19 20 21">
    <location>
        <begin position="46"/>
        <end position="61"/>
    </location>
</feature>
<feature type="disulfide bond" evidence="2 8 9 10 11 18 19 20 21">
    <location>
        <begin position="53"/>
        <end position="64"/>
    </location>
</feature>
<feature type="disulfide bond" evidence="2 8 9 10 11 18 19 20 21">
    <location>
        <begin position="60"/>
        <end position="71"/>
    </location>
</feature>
<feature type="mutagenesis site" description="Strong decrease in activity." evidence="12 13">
    <original>K</original>
    <variation>A</variation>
    <location>
        <position position="47"/>
    </location>
</feature>
<feature type="mutagenesis site" description="Strong decrease in activity." evidence="7 13">
    <original>Y</original>
    <variation>A</variation>
    <location>
        <position position="58"/>
    </location>
</feature>
<feature type="mutagenesis site" description="Decrease in affinity." evidence="7 13">
    <original>Y</original>
    <variation>F</variation>
    <location>
        <position position="58"/>
    </location>
</feature>
<feature type="mutagenesis site" description="Decrease in potency, but not in affinity." evidence="12 13">
    <original>R</original>
    <variation>A</variation>
    <location>
        <position position="62"/>
    </location>
</feature>
<feature type="mutagenesis site" description="Decrease in potency, but not in affinity." evidence="13">
    <original>Y</original>
    <variation>A</variation>
    <location>
        <position position="67"/>
    </location>
</feature>
<feature type="mutagenesis site" description="Decrease in potency, but not in affinity." evidence="12 13">
    <original>K</original>
    <variation>A</variation>
    <location>
        <position position="69"/>
    </location>
</feature>
<feature type="mutagenesis site" description="No change in activity." evidence="12">
    <original>R</original>
    <variation>A</variation>
    <location>
        <position position="70"/>
    </location>
</feature>
<feature type="turn" evidence="22">
    <location>
        <begin position="55"/>
        <end position="58"/>
    </location>
</feature>
<feature type="strand" evidence="22">
    <location>
        <begin position="60"/>
        <end position="62"/>
    </location>
</feature>
<feature type="turn" evidence="22">
    <location>
        <begin position="66"/>
        <end position="68"/>
    </location>
</feature>
<feature type="strand" evidence="22">
    <location>
        <begin position="69"/>
        <end position="71"/>
    </location>
</feature>
<sequence length="73" mass="7851">MKLTCVVIVAVLLLTACQLITADDSRGTQKHRALGSTTELSLSTRCKSPGSSCSPTSYNCCRSCNPYTKRCYG</sequence>
<protein>
    <recommendedName>
        <fullName evidence="15">Omega-conotoxin GVIA</fullName>
    </recommendedName>
    <alternativeName>
        <fullName>SNX-124</fullName>
    </alternativeName>
    <alternativeName>
        <fullName evidence="15">Shaker peptide</fullName>
    </alternativeName>
    <component>
        <recommendedName>
            <fullName evidence="14">Omega-conotoxin GVIB</fullName>
        </recommendedName>
    </component>
    <component>
        <recommendedName>
            <fullName evidence="14">Omega-conotoxin GVIC</fullName>
        </recommendedName>
    </component>
</protein>
<organism>
    <name type="scientific">Conus geographus</name>
    <name type="common">Geography cone</name>
    <name type="synonym">Nubecula geographus</name>
    <dbReference type="NCBI Taxonomy" id="6491"/>
    <lineage>
        <taxon>Eukaryota</taxon>
        <taxon>Metazoa</taxon>
        <taxon>Spiralia</taxon>
        <taxon>Lophotrochozoa</taxon>
        <taxon>Mollusca</taxon>
        <taxon>Gastropoda</taxon>
        <taxon>Caenogastropoda</taxon>
        <taxon>Neogastropoda</taxon>
        <taxon>Conoidea</taxon>
        <taxon>Conidae</taxon>
        <taxon>Conus</taxon>
        <taxon>Gastridium</taxon>
    </lineage>
</organism>
<reference key="1">
    <citation type="journal article" date="1992" name="Toxicon">
        <title>Precursor structure of omega-conotoxin GVIA determined from a cDNA clone.</title>
        <authorList>
            <person name="Colledge C.J."/>
            <person name="Hunsperger J.P."/>
            <person name="Imperial J.S."/>
            <person name="Hillyard D.R."/>
        </authorList>
    </citation>
    <scope>NUCLEOTIDE SEQUENCE [MRNA]</scope>
</reference>
<reference key="2">
    <citation type="journal article" date="1984" name="Biochemistry">
        <title>Purification and sequence of a presynaptic peptide toxin from Conus geographus venom.</title>
        <authorList>
            <person name="Olivera B.M."/>
            <person name="McIntosh J.M."/>
            <person name="Cruz L.J."/>
            <person name="Luque F.A."/>
            <person name="Gray W.R."/>
        </authorList>
    </citation>
    <scope>PROTEIN SEQUENCE OF 46-72 (GVIA)</scope>
    <scope>HYDROXYLATION AT PRO-49; PRO-55 AND PRO-66</scope>
    <scope>AMIDATION AT TYR-72</scope>
</reference>
<reference key="3">
    <citation type="journal article" date="1985" name="Science">
        <title>Peptide neurotoxins from fish-hunting cone snails.</title>
        <authorList>
            <person name="Olivera B.M."/>
            <person name="Gray W.R."/>
            <person name="Zeikus R.D."/>
            <person name="McIntosh J.M."/>
            <person name="Varga J."/>
            <person name="Rivier J.E."/>
            <person name="de Santos V."/>
            <person name="Cruz L.J."/>
        </authorList>
    </citation>
    <scope>PROTEIN SEQUENCE OF 46-73 (GVIB AND GVIC)</scope>
</reference>
<reference key="4">
    <citation type="journal article" date="1986" name="Biopolymers">
        <title>Synthesis and secondary-structure determination of omega-conotoxin GVIA: a 27-peptide with three intramolecular disulfide bonds.</title>
        <authorList>
            <person name="Nishiuchi Y."/>
            <person name="Kumagaye K."/>
            <person name="Noda Y."/>
            <person name="Watanabe T.X."/>
            <person name="Sakakibara S."/>
        </authorList>
    </citation>
    <scope>SYNTHESIS OF 46-72 (GVIA)</scope>
    <scope>DISULFIDE BONDS</scope>
</reference>
<reference key="5">
    <citation type="journal article" date="1993" name="Biochem. Biophys. Res. Commun.">
        <title>Role of basic residues for the binding of omega-conotoxin GVIA to N-type calcium channels.</title>
        <authorList>
            <person name="Sato K."/>
            <person name="Park N.G."/>
            <person name="Kohno T."/>
            <person name="Maeda T."/>
            <person name="Kim J.-I."/>
            <person name="Kato R."/>
            <person name="Takahashi M."/>
        </authorList>
    </citation>
    <scope>MUTAGENESIS OF LYS-47; ARG-62; LYS-69 AND ARG-70</scope>
</reference>
<reference key="6">
    <citation type="journal article" date="1994" name="J. Biol. Chem.">
        <title>Hydroxyl group of Tyr13 is essential for the activity of omega-conotoxin GVIA, a peptide toxin for N-type calcium channel.</title>
        <authorList>
            <person name="Kim J.-I."/>
            <person name="Takahashi M."/>
            <person name="Ogura A."/>
            <person name="Kohno T."/>
            <person name="Kudo Y."/>
            <person name="Sato K."/>
        </authorList>
    </citation>
    <scope>MUTAGENESIS OF TYR-58</scope>
</reference>
<reference key="7">
    <citation type="journal article" date="1997" name="J. Biol. Chem.">
        <title>Structure-function relationships of omega-conotoxin GVIA. Synthesis, structure, calcium channel binding, and functional assay of alanine-substituted analogues.</title>
        <authorList>
            <person name="Lew M.J."/>
            <person name="Flinn J.P."/>
            <person name="Pallaghy P.K."/>
            <person name="Murphy R."/>
            <person name="Whorlow S.L."/>
            <person name="Wright C.E."/>
            <person name="Norton R.S."/>
            <person name="Angus J.A."/>
        </authorList>
    </citation>
    <scope>SYNTHESIS OF 46-72 (GVIA)</scope>
    <scope>MUTAGENESIS OF LYS-47; TYR-58; ARG-62; TYR-67 AND LYS-69</scope>
    <scope>STRUCTURE BY NMR OF 46-72 (GVIA)</scope>
</reference>
<reference key="8">
    <citation type="journal article" date="2000" name="J. Biol. Chem.">
        <title>Novel omega-conotoxins from Conus catus discriminate among neuronal calcium channel subtypes.</title>
        <authorList>
            <person name="Lewis R.J."/>
            <person name="Nielsen K.J."/>
            <person name="Craik D.J."/>
            <person name="Loughnan M.L."/>
            <person name="Adams D.A."/>
            <person name="Sharpe I.A."/>
            <person name="Luchian T."/>
            <person name="Adams D.J."/>
            <person name="Bond T."/>
            <person name="Thomas L."/>
            <person name="Jones A."/>
            <person name="Matheson J.-L."/>
            <person name="Drinkwater R."/>
            <person name="Andrews P.R."/>
            <person name="Alewood P.F."/>
        </authorList>
    </citation>
    <scope>FUNCTION</scope>
    <scope>SYNTHESIS OF 46-72 (GVIA)</scope>
</reference>
<reference key="9">
    <citation type="journal article" date="2001" name="Biochemistry">
        <title>A new omega-conotoxin that targets N-type voltage-sensitive calcium channels with unusual specificity.</title>
        <authorList>
            <person name="Favreau P."/>
            <person name="Gilles N."/>
            <person name="Lamthanh H."/>
            <person name="Bournaud R."/>
            <person name="Shimahara T."/>
            <person name="Bouet F."/>
            <person name="Laboute P."/>
            <person name="Letourneux Y."/>
            <person name="Menez A."/>
            <person name="Molgo J."/>
            <person name="Le Gall F."/>
        </authorList>
    </citation>
    <scope>FUNCTION</scope>
    <scope>SYNTHESIS OF 46-72 (GVIA)</scope>
</reference>
<reference key="10">
    <citation type="journal article" date="1993" name="Biochem. Biophys. Res. Commun.">
        <title>Three-dimensional structure of omega-conotoxin GVIA determined by 1H NMR.</title>
        <authorList>
            <person name="Sevilla P."/>
            <person name="Bruix M."/>
            <person name="Santoro J."/>
            <person name="Gago F."/>
            <person name="Garcia A.G."/>
            <person name="Rico M."/>
        </authorList>
    </citation>
    <scope>STRUCTURE BY NMR OF 46-72 (GVIA)</scope>
    <scope>DISULFIDE BONDS</scope>
</reference>
<reference key="11">
    <citation type="journal article" date="1993" name="Biochemistry">
        <title>Solution structure of omega-conotoxin GVIA using 2-D NMR spectroscopy and relaxation matrix analysis.</title>
        <authorList>
            <person name="Davis J.H."/>
            <person name="Bradley E.K."/>
            <person name="Miljanich G.P."/>
            <person name="Nadasdi L."/>
            <person name="Ramachandran J."/>
            <person name="Basus V.J."/>
        </authorList>
    </citation>
    <scope>STRUCTURE BY NMR OF 46-72 (GVIA)</scope>
    <scope>DISULFIDE BONDS</scope>
</reference>
<reference key="12">
    <citation type="journal article" date="1993" name="J. Mol. Biol.">
        <title>Three-dimensional structure in solution of the calcium channel blocker omega-conotoxin.</title>
        <authorList>
            <person name="Pallaghy P.K."/>
            <person name="Duggan B.M."/>
            <person name="Pennington M.W."/>
            <person name="Norton R.S."/>
        </authorList>
    </citation>
    <scope>STRUCTURE BY NMR OF 46-72 (GVIA)</scope>
    <scope>DISULFIDE BONDS</scope>
</reference>
<reference key="13">
    <citation type="journal article" date="1993" name="Protein Sci.">
        <title>Solution structure of the calcium channel antagonist omega-conotoxin GVIA.</title>
        <authorList>
            <person name="Skalicky J.J."/>
            <person name="Metzler W.J."/>
            <person name="Ciesla D.J."/>
            <person name="Galdes A."/>
            <person name="Pardi A."/>
        </authorList>
    </citation>
    <scope>STRUCTURE BY NMR OF 46-72 (GVIA)</scope>
    <scope>DISULFIDE BONDS</scope>
</reference>
<reference key="14">
    <citation type="journal article" date="1999" name="J. Pept. Res.">
        <title>Refined solution structure of omega-conotoxin GVIA: implications for calcium channel binding.</title>
        <authorList>
            <person name="Pallaghy P.K."/>
            <person name="Norton R.S."/>
        </authorList>
    </citation>
    <scope>STRUCTURE BY NMR OF 46-72 (GVIA)</scope>
    <scope>DISULFIDE BONDS</scope>
</reference>
<reference key="15">
    <citation type="journal article" date="2000" name="J. Mol. Recognit.">
        <title>Structure-activity relationships of omega-conotoxins at N-type voltage-sensitive calcium channels.</title>
        <authorList>
            <person name="Nielsen K.J."/>
            <person name="Schroeder T."/>
            <person name="Lewis R.J."/>
        </authorList>
    </citation>
    <scope>REVIEW</scope>
</reference>
<accession>P01522</accession>